<reference key="1">
    <citation type="journal article" date="2002" name="Proc. Natl. Acad. Sci. U.S.A.">
        <title>Genome sequence of a serotype M3 strain of group A Streptococcus: phage-encoded toxins, the high-virulence phenotype, and clone emergence.</title>
        <authorList>
            <person name="Beres S.B."/>
            <person name="Sylva G.L."/>
            <person name="Barbian K.D."/>
            <person name="Lei B."/>
            <person name="Hoff J.S."/>
            <person name="Mammarella N.D."/>
            <person name="Liu M.-Y."/>
            <person name="Smoot J.C."/>
            <person name="Porcella S.F."/>
            <person name="Parkins L.D."/>
            <person name="Campbell D.S."/>
            <person name="Smith T.M."/>
            <person name="McCormick J.K."/>
            <person name="Leung D.Y.M."/>
            <person name="Schlievert P.M."/>
            <person name="Musser J.M."/>
        </authorList>
    </citation>
    <scope>NUCLEOTIDE SEQUENCE [LARGE SCALE GENOMIC DNA]</scope>
    <source>
        <strain>ATCC BAA-595 / MGAS315</strain>
    </source>
</reference>
<protein>
    <recommendedName>
        <fullName evidence="1">CTP synthase</fullName>
        <ecNumber evidence="1">6.3.4.2</ecNumber>
    </recommendedName>
    <alternativeName>
        <fullName evidence="1">Cytidine 5'-triphosphate synthase</fullName>
    </alternativeName>
    <alternativeName>
        <fullName evidence="1">Cytidine triphosphate synthetase</fullName>
        <shortName evidence="1">CTP synthetase</shortName>
        <shortName evidence="1">CTPS</shortName>
    </alternativeName>
    <alternativeName>
        <fullName evidence="1">UTP--ammonia ligase</fullName>
    </alternativeName>
</protein>
<comment type="function">
    <text evidence="1">Catalyzes the ATP-dependent amination of UTP to CTP with either L-glutamine or ammonia as the source of nitrogen. Regulates intracellular CTP levels through interactions with the four ribonucleotide triphosphates.</text>
</comment>
<comment type="catalytic activity">
    <reaction evidence="1">
        <text>UTP + L-glutamine + ATP + H2O = CTP + L-glutamate + ADP + phosphate + 2 H(+)</text>
        <dbReference type="Rhea" id="RHEA:26426"/>
        <dbReference type="ChEBI" id="CHEBI:15377"/>
        <dbReference type="ChEBI" id="CHEBI:15378"/>
        <dbReference type="ChEBI" id="CHEBI:29985"/>
        <dbReference type="ChEBI" id="CHEBI:30616"/>
        <dbReference type="ChEBI" id="CHEBI:37563"/>
        <dbReference type="ChEBI" id="CHEBI:43474"/>
        <dbReference type="ChEBI" id="CHEBI:46398"/>
        <dbReference type="ChEBI" id="CHEBI:58359"/>
        <dbReference type="ChEBI" id="CHEBI:456216"/>
        <dbReference type="EC" id="6.3.4.2"/>
    </reaction>
</comment>
<comment type="catalytic activity">
    <reaction evidence="1">
        <text>L-glutamine + H2O = L-glutamate + NH4(+)</text>
        <dbReference type="Rhea" id="RHEA:15889"/>
        <dbReference type="ChEBI" id="CHEBI:15377"/>
        <dbReference type="ChEBI" id="CHEBI:28938"/>
        <dbReference type="ChEBI" id="CHEBI:29985"/>
        <dbReference type="ChEBI" id="CHEBI:58359"/>
    </reaction>
</comment>
<comment type="catalytic activity">
    <reaction evidence="1">
        <text>UTP + NH4(+) + ATP = CTP + ADP + phosphate + 2 H(+)</text>
        <dbReference type="Rhea" id="RHEA:16597"/>
        <dbReference type="ChEBI" id="CHEBI:15378"/>
        <dbReference type="ChEBI" id="CHEBI:28938"/>
        <dbReference type="ChEBI" id="CHEBI:30616"/>
        <dbReference type="ChEBI" id="CHEBI:37563"/>
        <dbReference type="ChEBI" id="CHEBI:43474"/>
        <dbReference type="ChEBI" id="CHEBI:46398"/>
        <dbReference type="ChEBI" id="CHEBI:456216"/>
    </reaction>
</comment>
<comment type="activity regulation">
    <text evidence="1">Allosterically activated by GTP, when glutamine is the substrate; GTP has no effect on the reaction when ammonia is the substrate. The allosteric effector GTP functions by stabilizing the protein conformation that binds the tetrahedral intermediate(s) formed during glutamine hydrolysis. Inhibited by the product CTP, via allosteric rather than competitive inhibition.</text>
</comment>
<comment type="pathway">
    <text evidence="1">Pyrimidine metabolism; CTP biosynthesis via de novo pathway; CTP from UDP: step 2/2.</text>
</comment>
<comment type="subunit">
    <text evidence="1">Homotetramer.</text>
</comment>
<comment type="miscellaneous">
    <text evidence="1">CTPSs have evolved a hybrid strategy for distinguishing between UTP and CTP. The overlapping regions of the product feedback inhibitory and substrate sites recognize a common feature in both compounds, the triphosphate moiety. To differentiate isosteric substrate and product pyrimidine rings, an additional pocket far from the expected kinase/ligase catalytic site, specifically recognizes the cytosine and ribose portions of the product inhibitor.</text>
</comment>
<comment type="similarity">
    <text evidence="1">Belongs to the CTP synthase family.</text>
</comment>
<proteinExistence type="inferred from homology"/>
<keyword id="KW-0067">ATP-binding</keyword>
<keyword id="KW-0315">Glutamine amidotransferase</keyword>
<keyword id="KW-0436">Ligase</keyword>
<keyword id="KW-0460">Magnesium</keyword>
<keyword id="KW-0479">Metal-binding</keyword>
<keyword id="KW-0547">Nucleotide-binding</keyword>
<keyword id="KW-0665">Pyrimidine biosynthesis</keyword>
<evidence type="ECO:0000255" key="1">
    <source>
        <dbReference type="HAMAP-Rule" id="MF_01227"/>
    </source>
</evidence>
<name>PYRG_STRP3</name>
<gene>
    <name evidence="1" type="primary">pyrG</name>
    <name type="ordered locus">SpyM3_1632</name>
</gene>
<dbReference type="EC" id="6.3.4.2" evidence="1"/>
<dbReference type="EMBL" id="AE014074">
    <property type="protein sequence ID" value="AAM80239.1"/>
    <property type="molecule type" value="Genomic_DNA"/>
</dbReference>
<dbReference type="RefSeq" id="WP_002988149.1">
    <property type="nucleotide sequence ID" value="NC_004070.1"/>
</dbReference>
<dbReference type="SMR" id="P0DD70"/>
<dbReference type="KEGG" id="spg:SpyM3_1632"/>
<dbReference type="HOGENOM" id="CLU_011675_5_0_9"/>
<dbReference type="UniPathway" id="UPA00159">
    <property type="reaction ID" value="UER00277"/>
</dbReference>
<dbReference type="Proteomes" id="UP000000564">
    <property type="component" value="Chromosome"/>
</dbReference>
<dbReference type="GO" id="GO:0005829">
    <property type="term" value="C:cytosol"/>
    <property type="evidence" value="ECO:0007669"/>
    <property type="project" value="TreeGrafter"/>
</dbReference>
<dbReference type="GO" id="GO:0005524">
    <property type="term" value="F:ATP binding"/>
    <property type="evidence" value="ECO:0007669"/>
    <property type="project" value="UniProtKB-KW"/>
</dbReference>
<dbReference type="GO" id="GO:0003883">
    <property type="term" value="F:CTP synthase activity"/>
    <property type="evidence" value="ECO:0007669"/>
    <property type="project" value="UniProtKB-UniRule"/>
</dbReference>
<dbReference type="GO" id="GO:0004359">
    <property type="term" value="F:glutaminase activity"/>
    <property type="evidence" value="ECO:0007669"/>
    <property type="project" value="RHEA"/>
</dbReference>
<dbReference type="GO" id="GO:0042802">
    <property type="term" value="F:identical protein binding"/>
    <property type="evidence" value="ECO:0007669"/>
    <property type="project" value="TreeGrafter"/>
</dbReference>
<dbReference type="GO" id="GO:0046872">
    <property type="term" value="F:metal ion binding"/>
    <property type="evidence" value="ECO:0007669"/>
    <property type="project" value="UniProtKB-KW"/>
</dbReference>
<dbReference type="GO" id="GO:0044210">
    <property type="term" value="P:'de novo' CTP biosynthetic process"/>
    <property type="evidence" value="ECO:0007669"/>
    <property type="project" value="UniProtKB-UniRule"/>
</dbReference>
<dbReference type="GO" id="GO:0019856">
    <property type="term" value="P:pyrimidine nucleobase biosynthetic process"/>
    <property type="evidence" value="ECO:0007669"/>
    <property type="project" value="TreeGrafter"/>
</dbReference>
<dbReference type="CDD" id="cd03113">
    <property type="entry name" value="CTPS_N"/>
    <property type="match status" value="1"/>
</dbReference>
<dbReference type="CDD" id="cd01746">
    <property type="entry name" value="GATase1_CTP_Synthase"/>
    <property type="match status" value="1"/>
</dbReference>
<dbReference type="FunFam" id="3.40.50.300:FF:000009">
    <property type="entry name" value="CTP synthase"/>
    <property type="match status" value="1"/>
</dbReference>
<dbReference type="FunFam" id="3.40.50.880:FF:000002">
    <property type="entry name" value="CTP synthase"/>
    <property type="match status" value="1"/>
</dbReference>
<dbReference type="Gene3D" id="3.40.50.880">
    <property type="match status" value="1"/>
</dbReference>
<dbReference type="Gene3D" id="3.40.50.300">
    <property type="entry name" value="P-loop containing nucleotide triphosphate hydrolases"/>
    <property type="match status" value="1"/>
</dbReference>
<dbReference type="HAMAP" id="MF_01227">
    <property type="entry name" value="PyrG"/>
    <property type="match status" value="1"/>
</dbReference>
<dbReference type="InterPro" id="IPR029062">
    <property type="entry name" value="Class_I_gatase-like"/>
</dbReference>
<dbReference type="InterPro" id="IPR004468">
    <property type="entry name" value="CTP_synthase"/>
</dbReference>
<dbReference type="InterPro" id="IPR017456">
    <property type="entry name" value="CTP_synthase_N"/>
</dbReference>
<dbReference type="InterPro" id="IPR017926">
    <property type="entry name" value="GATASE"/>
</dbReference>
<dbReference type="InterPro" id="IPR033828">
    <property type="entry name" value="GATase1_CTP_Synthase"/>
</dbReference>
<dbReference type="InterPro" id="IPR027417">
    <property type="entry name" value="P-loop_NTPase"/>
</dbReference>
<dbReference type="NCBIfam" id="NF003792">
    <property type="entry name" value="PRK05380.1"/>
    <property type="match status" value="1"/>
</dbReference>
<dbReference type="NCBIfam" id="TIGR00337">
    <property type="entry name" value="PyrG"/>
    <property type="match status" value="1"/>
</dbReference>
<dbReference type="PANTHER" id="PTHR11550">
    <property type="entry name" value="CTP SYNTHASE"/>
    <property type="match status" value="1"/>
</dbReference>
<dbReference type="PANTHER" id="PTHR11550:SF0">
    <property type="entry name" value="CTP SYNTHASE-RELATED"/>
    <property type="match status" value="1"/>
</dbReference>
<dbReference type="Pfam" id="PF06418">
    <property type="entry name" value="CTP_synth_N"/>
    <property type="match status" value="1"/>
</dbReference>
<dbReference type="Pfam" id="PF00117">
    <property type="entry name" value="GATase"/>
    <property type="match status" value="1"/>
</dbReference>
<dbReference type="SUPFAM" id="SSF52317">
    <property type="entry name" value="Class I glutamine amidotransferase-like"/>
    <property type="match status" value="1"/>
</dbReference>
<dbReference type="SUPFAM" id="SSF52540">
    <property type="entry name" value="P-loop containing nucleoside triphosphate hydrolases"/>
    <property type="match status" value="1"/>
</dbReference>
<dbReference type="PROSITE" id="PS51273">
    <property type="entry name" value="GATASE_TYPE_1"/>
    <property type="match status" value="1"/>
</dbReference>
<accession>P0DD70</accession>
<accession>P65926</accession>
<accession>Q99Y33</accession>
<sequence length="534" mass="59507">MTKYIFVTGGVVSSIGKGIVAASLGRLLKNRGLKVTIQKFDPYINIDPGTMSPYQHGEVYVTDDGAETDLDLGHYERFIDINLNKYSNVTTGKIYSEVLRKERKGEYLGATVQVIPHITDALKEKIKRAASTTDSDVIITEVGGTVGDIESLPFLEALRQMKADVGSENVMYIHTTLLPYLKAAGEMKTKPTQHSVKELRGLGIQPNMLVIRTEEPVEQGIKNKLAQFCDVNSEAVIESRDVEHLYQIPLNLQAQSMDQIVCDHLKLNAPQADMTEWSAMVDKVMNLRKTTKIALVGKYVELPDAYLSVVEALKHSGYANDTAIDLKWVNANDVTVDNAADLLGDADGIIVPGGFGQRGTEGKIQAIRYARENDVPMLGICLGMQLTCVEFARHVLNMEGANSFELEPSTKYPIIDIMRDQIDIEDMGGTLRLGLYPCKLKPGSKAAMAYNNQEVVQRRHRHRYEFNNKFRPEFEAAGFVFSGVSPDNRLVEIVELKEKKFFVAAQYHPELQSRPNRPEELYTAFVTAAIKNSN</sequence>
<organism>
    <name type="scientific">Streptococcus pyogenes serotype M3 (strain ATCC BAA-595 / MGAS315)</name>
    <dbReference type="NCBI Taxonomy" id="198466"/>
    <lineage>
        <taxon>Bacteria</taxon>
        <taxon>Bacillati</taxon>
        <taxon>Bacillota</taxon>
        <taxon>Bacilli</taxon>
        <taxon>Lactobacillales</taxon>
        <taxon>Streptococcaceae</taxon>
        <taxon>Streptococcus</taxon>
    </lineage>
</organism>
<feature type="chain" id="PRO_0000138236" description="CTP synthase">
    <location>
        <begin position="1"/>
        <end position="534"/>
    </location>
</feature>
<feature type="domain" description="Glutamine amidotransferase type-1" evidence="1">
    <location>
        <begin position="292"/>
        <end position="534"/>
    </location>
</feature>
<feature type="region of interest" description="Amidoligase domain" evidence="1">
    <location>
        <begin position="1"/>
        <end position="267"/>
    </location>
</feature>
<feature type="active site" description="Nucleophile; for glutamine hydrolysis" evidence="1">
    <location>
        <position position="381"/>
    </location>
</feature>
<feature type="active site" evidence="1">
    <location>
        <position position="508"/>
    </location>
</feature>
<feature type="active site" evidence="1">
    <location>
        <position position="510"/>
    </location>
</feature>
<feature type="binding site" evidence="1">
    <location>
        <position position="13"/>
    </location>
    <ligand>
        <name>CTP</name>
        <dbReference type="ChEBI" id="CHEBI:37563"/>
        <note>allosteric inhibitor</note>
    </ligand>
</feature>
<feature type="binding site" evidence="1">
    <location>
        <position position="13"/>
    </location>
    <ligand>
        <name>UTP</name>
        <dbReference type="ChEBI" id="CHEBI:46398"/>
    </ligand>
</feature>
<feature type="binding site" evidence="1">
    <location>
        <begin position="14"/>
        <end position="19"/>
    </location>
    <ligand>
        <name>ATP</name>
        <dbReference type="ChEBI" id="CHEBI:30616"/>
    </ligand>
</feature>
<feature type="binding site" evidence="1">
    <location>
        <position position="54"/>
    </location>
    <ligand>
        <name>L-glutamine</name>
        <dbReference type="ChEBI" id="CHEBI:58359"/>
    </ligand>
</feature>
<feature type="binding site" evidence="1">
    <location>
        <position position="71"/>
    </location>
    <ligand>
        <name>ATP</name>
        <dbReference type="ChEBI" id="CHEBI:30616"/>
    </ligand>
</feature>
<feature type="binding site" evidence="1">
    <location>
        <position position="71"/>
    </location>
    <ligand>
        <name>Mg(2+)</name>
        <dbReference type="ChEBI" id="CHEBI:18420"/>
    </ligand>
</feature>
<feature type="binding site" evidence="1">
    <location>
        <position position="141"/>
    </location>
    <ligand>
        <name>Mg(2+)</name>
        <dbReference type="ChEBI" id="CHEBI:18420"/>
    </ligand>
</feature>
<feature type="binding site" evidence="1">
    <location>
        <begin position="148"/>
        <end position="150"/>
    </location>
    <ligand>
        <name>CTP</name>
        <dbReference type="ChEBI" id="CHEBI:37563"/>
        <note>allosteric inhibitor</note>
    </ligand>
</feature>
<feature type="binding site" evidence="1">
    <location>
        <begin position="188"/>
        <end position="193"/>
    </location>
    <ligand>
        <name>CTP</name>
        <dbReference type="ChEBI" id="CHEBI:37563"/>
        <note>allosteric inhibitor</note>
    </ligand>
</feature>
<feature type="binding site" evidence="1">
    <location>
        <begin position="188"/>
        <end position="193"/>
    </location>
    <ligand>
        <name>UTP</name>
        <dbReference type="ChEBI" id="CHEBI:46398"/>
    </ligand>
</feature>
<feature type="binding site" evidence="1">
    <location>
        <position position="224"/>
    </location>
    <ligand>
        <name>CTP</name>
        <dbReference type="ChEBI" id="CHEBI:37563"/>
        <note>allosteric inhibitor</note>
    </ligand>
</feature>
<feature type="binding site" evidence="1">
    <location>
        <position position="224"/>
    </location>
    <ligand>
        <name>UTP</name>
        <dbReference type="ChEBI" id="CHEBI:46398"/>
    </ligand>
</feature>
<feature type="binding site" evidence="1">
    <location>
        <begin position="240"/>
        <end position="242"/>
    </location>
    <ligand>
        <name>ATP</name>
        <dbReference type="ChEBI" id="CHEBI:30616"/>
    </ligand>
</feature>
<feature type="binding site" evidence="1">
    <location>
        <position position="354"/>
    </location>
    <ligand>
        <name>L-glutamine</name>
        <dbReference type="ChEBI" id="CHEBI:58359"/>
    </ligand>
</feature>
<feature type="binding site" evidence="1">
    <location>
        <begin position="382"/>
        <end position="385"/>
    </location>
    <ligand>
        <name>L-glutamine</name>
        <dbReference type="ChEBI" id="CHEBI:58359"/>
    </ligand>
</feature>
<feature type="binding site" evidence="1">
    <location>
        <position position="405"/>
    </location>
    <ligand>
        <name>L-glutamine</name>
        <dbReference type="ChEBI" id="CHEBI:58359"/>
    </ligand>
</feature>
<feature type="binding site" evidence="1">
    <location>
        <position position="463"/>
    </location>
    <ligand>
        <name>L-glutamine</name>
        <dbReference type="ChEBI" id="CHEBI:58359"/>
    </ligand>
</feature>